<gene>
    <name type="primary">Pglyrp1</name>
    <name type="synonym">Pglyrp</name>
    <name type="synonym">Pgrp</name>
</gene>
<feature type="signal peptide" evidence="3">
    <location>
        <begin position="1"/>
        <end position="17"/>
    </location>
</feature>
<feature type="chain" id="PRO_0000023903" description="Peptidoglycan recognition protein 1">
    <location>
        <begin position="18"/>
        <end position="183"/>
    </location>
</feature>
<feature type="domain" description="N-acetylmuramoyl-L-alanine amidase" evidence="3">
    <location>
        <begin position="40"/>
        <end position="168"/>
    </location>
</feature>
<feature type="disulfide bond" evidence="1">
    <location>
        <begin position="18"/>
        <end position="142"/>
    </location>
</feature>
<feature type="disulfide bond" evidence="1">
    <location>
        <begin position="34"/>
        <end position="79"/>
    </location>
</feature>
<feature type="disulfide bond" evidence="1">
    <location>
        <begin position="55"/>
        <end position="61"/>
    </location>
</feature>
<evidence type="ECO:0000250" key="1"/>
<evidence type="ECO:0000250" key="2">
    <source>
        <dbReference type="UniProtKB" id="O75594"/>
    </source>
</evidence>
<evidence type="ECO:0000255" key="3"/>
<evidence type="ECO:0000305" key="4"/>
<protein>
    <recommendedName>
        <fullName>Peptidoglycan recognition protein 1</fullName>
    </recommendedName>
    <alternativeName>
        <fullName>Peptidoglycan recognition protein short</fullName>
        <shortName>PGRP-S</shortName>
    </alternativeName>
</protein>
<dbReference type="EMBL" id="AF154114">
    <property type="protein sequence ID" value="AAF73252.1"/>
    <property type="molecule type" value="mRNA"/>
</dbReference>
<dbReference type="RefSeq" id="NP_445825.1">
    <property type="nucleotide sequence ID" value="NM_053373.1"/>
</dbReference>
<dbReference type="SMR" id="Q9JLN4"/>
<dbReference type="BioGRID" id="249930">
    <property type="interactions" value="1"/>
</dbReference>
<dbReference type="FunCoup" id="Q9JLN4">
    <property type="interactions" value="95"/>
</dbReference>
<dbReference type="IntAct" id="Q9JLN4">
    <property type="interactions" value="1"/>
</dbReference>
<dbReference type="STRING" id="10116.ENSRNOP00000018233"/>
<dbReference type="iPTMnet" id="Q9JLN4"/>
<dbReference type="PhosphoSitePlus" id="Q9JLN4"/>
<dbReference type="PaxDb" id="10116-ENSRNOP00000018233"/>
<dbReference type="GeneID" id="84387"/>
<dbReference type="KEGG" id="rno:84387"/>
<dbReference type="UCSC" id="RGD:621429">
    <property type="organism name" value="rat"/>
</dbReference>
<dbReference type="AGR" id="RGD:621429"/>
<dbReference type="CTD" id="8993"/>
<dbReference type="RGD" id="621429">
    <property type="gene designation" value="Pglyrp1"/>
</dbReference>
<dbReference type="eggNOG" id="ENOG502S2KY">
    <property type="taxonomic scope" value="Eukaryota"/>
</dbReference>
<dbReference type="InParanoid" id="Q9JLN4"/>
<dbReference type="OrthoDB" id="10001926at2759"/>
<dbReference type="PhylomeDB" id="Q9JLN4"/>
<dbReference type="Reactome" id="R-RNO-6798695">
    <property type="pathway name" value="Neutrophil degranulation"/>
</dbReference>
<dbReference type="Reactome" id="R-RNO-6803157">
    <property type="pathway name" value="Antimicrobial peptides"/>
</dbReference>
<dbReference type="PRO" id="PR:Q9JLN4"/>
<dbReference type="Proteomes" id="UP000002494">
    <property type="component" value="Unplaced"/>
</dbReference>
<dbReference type="GO" id="GO:0005615">
    <property type="term" value="C:extracellular space"/>
    <property type="evidence" value="ECO:0000266"/>
    <property type="project" value="RGD"/>
</dbReference>
<dbReference type="GO" id="GO:0030544">
    <property type="term" value="F:Hsp70 protein binding"/>
    <property type="evidence" value="ECO:0000266"/>
    <property type="project" value="RGD"/>
</dbReference>
<dbReference type="GO" id="GO:0060090">
    <property type="term" value="F:molecular adaptor activity"/>
    <property type="evidence" value="ECO:0000266"/>
    <property type="project" value="RGD"/>
</dbReference>
<dbReference type="GO" id="GO:0008745">
    <property type="term" value="F:N-acetylmuramoyl-L-alanine amidase activity"/>
    <property type="evidence" value="ECO:0007669"/>
    <property type="project" value="InterPro"/>
</dbReference>
<dbReference type="GO" id="GO:0042834">
    <property type="term" value="F:peptidoglycan binding"/>
    <property type="evidence" value="ECO:0000250"/>
    <property type="project" value="UniProtKB"/>
</dbReference>
<dbReference type="GO" id="GO:0016019">
    <property type="term" value="F:peptidoglycan immune receptor activity"/>
    <property type="evidence" value="ECO:0000266"/>
    <property type="project" value="RGD"/>
</dbReference>
<dbReference type="GO" id="GO:0048018">
    <property type="term" value="F:receptor ligand activity"/>
    <property type="evidence" value="ECO:0000266"/>
    <property type="project" value="RGD"/>
</dbReference>
<dbReference type="GO" id="GO:0008270">
    <property type="term" value="F:zinc ion binding"/>
    <property type="evidence" value="ECO:0007669"/>
    <property type="project" value="InterPro"/>
</dbReference>
<dbReference type="GO" id="GO:0061844">
    <property type="term" value="P:antimicrobial humoral immune response mediated by antimicrobial peptide"/>
    <property type="evidence" value="ECO:0000266"/>
    <property type="project" value="RGD"/>
</dbReference>
<dbReference type="GO" id="GO:0051701">
    <property type="term" value="P:biological process involved in interaction with host"/>
    <property type="evidence" value="ECO:0000266"/>
    <property type="project" value="RGD"/>
</dbReference>
<dbReference type="GO" id="GO:0042742">
    <property type="term" value="P:defense response to bacterium"/>
    <property type="evidence" value="ECO:0000318"/>
    <property type="project" value="GO_Central"/>
</dbReference>
<dbReference type="GO" id="GO:0050830">
    <property type="term" value="P:defense response to Gram-positive bacterium"/>
    <property type="evidence" value="ECO:0000266"/>
    <property type="project" value="RGD"/>
</dbReference>
<dbReference type="GO" id="GO:0016045">
    <property type="term" value="P:detection of bacterium"/>
    <property type="evidence" value="ECO:0000266"/>
    <property type="project" value="RGD"/>
</dbReference>
<dbReference type="GO" id="GO:0006955">
    <property type="term" value="P:immune response"/>
    <property type="evidence" value="ECO:0000318"/>
    <property type="project" value="GO_Central"/>
</dbReference>
<dbReference type="GO" id="GO:0045087">
    <property type="term" value="P:innate immune response"/>
    <property type="evidence" value="ECO:0007669"/>
    <property type="project" value="UniProtKB-KW"/>
</dbReference>
<dbReference type="GO" id="GO:0050728">
    <property type="term" value="P:negative regulation of inflammatory response"/>
    <property type="evidence" value="ECO:0000266"/>
    <property type="project" value="RGD"/>
</dbReference>
<dbReference type="GO" id="GO:0032827">
    <property type="term" value="P:negative regulation of natural killer cell differentiation involved in immune response"/>
    <property type="evidence" value="ECO:0000266"/>
    <property type="project" value="RGD"/>
</dbReference>
<dbReference type="GO" id="GO:0032689">
    <property type="term" value="P:negative regulation of type II interferon production"/>
    <property type="evidence" value="ECO:0000266"/>
    <property type="project" value="RGD"/>
</dbReference>
<dbReference type="GO" id="GO:0009253">
    <property type="term" value="P:peptidoglycan catabolic process"/>
    <property type="evidence" value="ECO:0007669"/>
    <property type="project" value="InterPro"/>
</dbReference>
<dbReference type="GO" id="GO:0045187">
    <property type="term" value="P:regulation of circadian sleep/wake cycle, sleep"/>
    <property type="evidence" value="ECO:0000270"/>
    <property type="project" value="RGD"/>
</dbReference>
<dbReference type="GO" id="GO:0009617">
    <property type="term" value="P:response to bacterium"/>
    <property type="evidence" value="ECO:0000266"/>
    <property type="project" value="RGD"/>
</dbReference>
<dbReference type="CDD" id="cd06583">
    <property type="entry name" value="PGRP"/>
    <property type="match status" value="1"/>
</dbReference>
<dbReference type="FunFam" id="3.40.80.10:FF:000001">
    <property type="entry name" value="Peptidoglycan recognition protein 1"/>
    <property type="match status" value="1"/>
</dbReference>
<dbReference type="Gene3D" id="3.40.80.10">
    <property type="entry name" value="Peptidoglycan recognition protein-like"/>
    <property type="match status" value="1"/>
</dbReference>
<dbReference type="InterPro" id="IPR036505">
    <property type="entry name" value="Amidase/PGRP_sf"/>
</dbReference>
<dbReference type="InterPro" id="IPR002502">
    <property type="entry name" value="Amidase_domain"/>
</dbReference>
<dbReference type="InterPro" id="IPR017331">
    <property type="entry name" value="Peptidoglycan_recognition"/>
</dbReference>
<dbReference type="InterPro" id="IPR015510">
    <property type="entry name" value="PGRP"/>
</dbReference>
<dbReference type="InterPro" id="IPR006619">
    <property type="entry name" value="PGRP_domain_met/bac"/>
</dbReference>
<dbReference type="PANTHER" id="PTHR11022">
    <property type="entry name" value="PEPTIDOGLYCAN RECOGNITION PROTEIN"/>
    <property type="match status" value="1"/>
</dbReference>
<dbReference type="PANTHER" id="PTHR11022:SF58">
    <property type="entry name" value="PEPTIDOGLYCAN RECOGNITION PROTEIN 1"/>
    <property type="match status" value="1"/>
</dbReference>
<dbReference type="Pfam" id="PF01510">
    <property type="entry name" value="Amidase_2"/>
    <property type="match status" value="1"/>
</dbReference>
<dbReference type="PIRSF" id="PIRSF037945">
    <property type="entry name" value="PGRPs"/>
    <property type="match status" value="1"/>
</dbReference>
<dbReference type="SMART" id="SM00644">
    <property type="entry name" value="Ami_2"/>
    <property type="match status" value="1"/>
</dbReference>
<dbReference type="SMART" id="SM00701">
    <property type="entry name" value="PGRP"/>
    <property type="match status" value="1"/>
</dbReference>
<dbReference type="SUPFAM" id="SSF55846">
    <property type="entry name" value="N-acetylmuramoyl-L-alanine amidase-like"/>
    <property type="match status" value="1"/>
</dbReference>
<reference key="1">
    <citation type="journal article" date="2001" name="Cytokine">
        <title>The cloning of a rat peptidoglycan recognition protein (PGRP) and its induction in brain by sleep deprivation.</title>
        <authorList>
            <person name="Rehman A."/>
            <person name="Taishi P."/>
            <person name="Fang J."/>
            <person name="Majde J.A."/>
            <person name="Krueger J.M."/>
        </authorList>
    </citation>
    <scope>NUCLEOTIDE SEQUENCE [MRNA]</scope>
    <source>
        <strain>Sprague-Dawley</strain>
        <tissue>Spleen</tissue>
    </source>
</reference>
<reference key="2">
    <citation type="journal article" date="2006" name="Proc. Natl. Acad. Sci. U.S.A.">
        <title>Quantitative phosphoproteomics of vasopressin-sensitive renal cells: regulation of aquaporin-2 phosphorylation at two sites.</title>
        <authorList>
            <person name="Hoffert J.D."/>
            <person name="Pisitkun T."/>
            <person name="Wang G."/>
            <person name="Shen R.-F."/>
            <person name="Knepper M.A."/>
        </authorList>
    </citation>
    <scope>IDENTIFICATION BY MASS SPECTROMETRY [LARGE SCALE ANALYSIS]</scope>
</reference>
<name>PGRP1_RAT</name>
<organism>
    <name type="scientific">Rattus norvegicus</name>
    <name type="common">Rat</name>
    <dbReference type="NCBI Taxonomy" id="10116"/>
    <lineage>
        <taxon>Eukaryota</taxon>
        <taxon>Metazoa</taxon>
        <taxon>Chordata</taxon>
        <taxon>Craniata</taxon>
        <taxon>Vertebrata</taxon>
        <taxon>Euteleostomi</taxon>
        <taxon>Mammalia</taxon>
        <taxon>Eutheria</taxon>
        <taxon>Euarchontoglires</taxon>
        <taxon>Glires</taxon>
        <taxon>Rodentia</taxon>
        <taxon>Myomorpha</taxon>
        <taxon>Muroidea</taxon>
        <taxon>Muridae</taxon>
        <taxon>Murinae</taxon>
        <taxon>Rattus</taxon>
    </lineage>
</organism>
<accession>Q9JLN4</accession>
<proteinExistence type="evidence at protein level"/>
<keyword id="KW-0044">Antibiotic</keyword>
<keyword id="KW-0929">Antimicrobial</keyword>
<keyword id="KW-1015">Disulfide bond</keyword>
<keyword id="KW-0391">Immunity</keyword>
<keyword id="KW-0399">Innate immunity</keyword>
<keyword id="KW-1185">Reference proteome</keyword>
<keyword id="KW-0964">Secreted</keyword>
<keyword id="KW-0732">Signal</keyword>
<sequence length="183" mass="20591">MLFAWAPFPALLGLADSCCFVVPRSEWKALPSECSKGLKKPVRYVVISHTAGSFCSSPDSCEQQARNVQLYQMKQLGWCDVAYNFLIGEDGHVYEGRGWTIKGDHTGPIWNPMSIGITFMGDYSHRVPAKRALRAALNLLKCGVSEGFLRSNYEVKGHRDVQSTLSPGDQLYEIIQSWDHYRE</sequence>
<comment type="function">
    <text evidence="2">Innate immunity protein that plays several important functions in antimicrobial and antitumor defense systems. Acts as a pattern receptor that binds to murein peptidoglycans (PGN) of Gram-positive bacteria and thus provides bactericidal activity. Forms an equimolar complex with heat shock protein HSPA1A and induces programmed cell death through apoptosis and necroptosis in tumor cell lines by activating the TNFR1 receptor on the target cell membrane. In addition, acts in complex with the Ca(2+)-binding protein S100A4 as a chemoattractant able to induce lymphocyte movement. Mechanistically, this complex acts as a ligand of the chemotactic receptors CCR5 and CXCR3 which are present on the cells of the immune system. Promotes also the activation of lymphocytes that become able to kill virus-infected cells as well as tumor cells by modulating the spectrum of their target-cell specificity. Induction of cytotoxicity on monocyte surface requires interaction with TREM1 receptor.</text>
</comment>
<comment type="subcellular location">
    <subcellularLocation>
        <location evidence="1">Secreted</location>
    </subcellularLocation>
    <subcellularLocation>
        <location evidence="1">Cytoplasmic granule</location>
    </subcellularLocation>
</comment>
<comment type="tissue specificity">
    <text>Expressed in all regions of the brain.</text>
</comment>
<comment type="induction">
    <text>By sleep deprivation in the brain stem and in the hypothalamus.</text>
</comment>
<comment type="similarity">
    <text evidence="4">Belongs to the N-acetylmuramoyl-L-alanine amidase 2 family.</text>
</comment>